<feature type="chain" id="PRO_0000059031" description="Photosystem II reaction center protein Psb30">
    <location>
        <begin position="1"/>
        <end position="33"/>
    </location>
</feature>
<feature type="transmembrane region" description="Helical" evidence="1">
    <location>
        <begin position="5"/>
        <end position="25"/>
    </location>
</feature>
<dbReference type="EMBL" id="X04465">
    <property type="protein sequence ID" value="CAA28069.1"/>
    <property type="molecule type" value="Genomic_DNA"/>
</dbReference>
<dbReference type="PIR" id="S01581">
    <property type="entry name" value="A05010"/>
</dbReference>
<dbReference type="RefSeq" id="NP_039283.1">
    <property type="nucleotide sequence ID" value="NC_001319.1"/>
</dbReference>
<dbReference type="SMR" id="P31560"/>
<dbReference type="GeneID" id="2702586"/>
<dbReference type="GO" id="GO:0009535">
    <property type="term" value="C:chloroplast thylakoid membrane"/>
    <property type="evidence" value="ECO:0007669"/>
    <property type="project" value="UniProtKB-SubCell"/>
</dbReference>
<dbReference type="GO" id="GO:0009523">
    <property type="term" value="C:photosystem II"/>
    <property type="evidence" value="ECO:0007669"/>
    <property type="project" value="UniProtKB-KW"/>
</dbReference>
<dbReference type="GO" id="GO:0015979">
    <property type="term" value="P:photosynthesis"/>
    <property type="evidence" value="ECO:0007669"/>
    <property type="project" value="UniProtKB-KW"/>
</dbReference>
<dbReference type="HAMAP" id="MF_01329">
    <property type="entry name" value="PSII_Psb30_Ycf12"/>
    <property type="match status" value="1"/>
</dbReference>
<dbReference type="InterPro" id="IPR010284">
    <property type="entry name" value="PSII_Ycf12_core-subunit"/>
</dbReference>
<dbReference type="NCBIfam" id="NF010239">
    <property type="entry name" value="PRK13686.1"/>
    <property type="match status" value="1"/>
</dbReference>
<dbReference type="Pfam" id="PF05969">
    <property type="entry name" value="PSII_Ycf12"/>
    <property type="match status" value="1"/>
</dbReference>
<proteinExistence type="inferred from homology"/>
<organism>
    <name type="scientific">Marchantia polymorpha</name>
    <name type="common">Common liverwort</name>
    <name type="synonym">Marchantia aquatica</name>
    <dbReference type="NCBI Taxonomy" id="3197"/>
    <lineage>
        <taxon>Eukaryota</taxon>
        <taxon>Viridiplantae</taxon>
        <taxon>Streptophyta</taxon>
        <taxon>Embryophyta</taxon>
        <taxon>Marchantiophyta</taxon>
        <taxon>Marchantiopsida</taxon>
        <taxon>Marchantiidae</taxon>
        <taxon>Marchantiales</taxon>
        <taxon>Marchantiaceae</taxon>
        <taxon>Marchantia</taxon>
    </lineage>
</organism>
<reference key="1">
    <citation type="journal article" date="1988" name="J. Mol. Biol.">
        <title>Structure and organization of Marchantia polymorpha chloroplast genome. II. Gene organization of the large single copy region from rps'12 to atpB.</title>
        <authorList>
            <person name="Umesono K."/>
            <person name="Inokuchi H."/>
            <person name="Shiki Y."/>
            <person name="Takeuchi M."/>
            <person name="Chang Z."/>
            <person name="Fukuzawa H."/>
            <person name="Kohchi T."/>
            <person name="Shirai H."/>
            <person name="Ohyama K."/>
            <person name="Ozeki H."/>
        </authorList>
    </citation>
    <scope>NUCLEOTIDE SEQUENCE [GENOMIC DNA]</scope>
</reference>
<reference key="2">
    <citation type="journal article" date="1986" name="Nature">
        <title>Chloroplast gene organization deduced from complete sequence of liverwort Marchantia polymorpha chloroplast DNA.</title>
        <authorList>
            <person name="Ohyama K."/>
            <person name="Fukuzawa H."/>
            <person name="Kohchi T."/>
            <person name="Shirai H."/>
            <person name="Sano T."/>
            <person name="Sano S."/>
            <person name="Umesono K."/>
            <person name="Shiki Y."/>
            <person name="Takeuchi M."/>
            <person name="Chang Z."/>
            <person name="Aota S."/>
            <person name="Inokuchi H."/>
            <person name="Ozeki H."/>
        </authorList>
    </citation>
    <scope>NUCLEOTIDE SEQUENCE [LARGE SCALE GENOMIC DNA]</scope>
</reference>
<accession>P31560</accession>
<evidence type="ECO:0000255" key="1">
    <source>
        <dbReference type="HAMAP-Rule" id="MF_01329"/>
    </source>
</evidence>
<gene>
    <name evidence="1" type="primary">psb30</name>
    <name evidence="1" type="synonym">ycf12</name>
</gene>
<comment type="function">
    <text evidence="1">A core subunit of photosystem II (PSII), probably helps stabilize the reaction center.</text>
</comment>
<comment type="subunit">
    <text evidence="1">PSII is composed of 1 copy each of membrane proteins PsbA, PsbB, PsbC, PsbD, PsbE, PsbF, PsbH, PsbI, PsbJ, PsbK, PsbL, PsbM, PsbT, PsbX, PsbY, PsbZ, Psb30/Ycf12, peripheral proteins of the oxygen-evolving complex and a large number of cofactors. It forms dimeric complexes.</text>
</comment>
<comment type="subcellular location">
    <subcellularLocation>
        <location evidence="1">Plastid</location>
        <location evidence="1">Chloroplast thylakoid membrane</location>
        <topology evidence="1">Single-pass membrane protein</topology>
    </subcellularLocation>
</comment>
<comment type="similarity">
    <text evidence="1">Belongs to the Psb30/Ycf12 family.</text>
</comment>
<keyword id="KW-0150">Chloroplast</keyword>
<keyword id="KW-0472">Membrane</keyword>
<keyword id="KW-0602">Photosynthesis</keyword>
<keyword id="KW-0604">Photosystem II</keyword>
<keyword id="KW-0934">Plastid</keyword>
<keyword id="KW-0793">Thylakoid</keyword>
<keyword id="KW-0812">Transmembrane</keyword>
<keyword id="KW-1133">Transmembrane helix</keyword>
<protein>
    <recommendedName>
        <fullName evidence="1">Photosystem II reaction center protein Psb30</fullName>
    </recommendedName>
    <alternativeName>
        <fullName evidence="1">Photosystem II reaction center protein Ycf12</fullName>
    </alternativeName>
</protein>
<geneLocation type="chloroplast"/>
<sequence length="33" mass="3386">MNLEVIAQLTVLALIVASGPLVIALLAARKGNL</sequence>
<name>PSB30_MARPO</name>